<sequence length="180" mass="19810">MASMSNITPDIIVNAQINSEDENVLDFIIEDEYYLKKRGVGAHIIKVASSPQLRLLYKNAYSTVSCGNYGVLCNLVQNGEYDLNAIMFNCAEIKLNKGQMLFQTKIWRSDNSKTDAAVHTSSPKRTVETENDDDGEAASAAAIDEQEGNADVVGLDFEENIDDGDAPTPKKQKLDNAKQD</sequence>
<gene>
    <name type="primary">TLP20</name>
</gene>
<reference key="1">
    <citation type="journal article" date="1994" name="Virology">
        <title>The complete DNA sequence of Autographa californica nuclear polyhedrosis virus.</title>
        <authorList>
            <person name="Ayres M.D."/>
            <person name="Howard S.C."/>
            <person name="Kuzio J."/>
            <person name="Lopez-Ferber M."/>
            <person name="Possee R.D."/>
        </authorList>
    </citation>
    <scope>NUCLEOTIDE SEQUENCE [LARGE SCALE GENOMIC DNA]</scope>
    <source>
        <strain>C6</strain>
    </source>
</reference>
<reference key="2">
    <citation type="journal article" date="1994" name="J. Gen. Virol.">
        <title>Nucleotide sequence and genetic organization of a 7.3 kb region (map unit 47 to 52.5) of Autographa californica nuclear polyhedrosis virus fragment EcoRI-C.</title>
        <authorList>
            <person name="Kool M."/>
            <person name="Broer R."/>
            <person name="Zuidema D."/>
            <person name="Goldbach R.W."/>
            <person name="Vlak J.M."/>
        </authorList>
    </citation>
    <scope>NUCLEOTIDE SEQUENCE [GENOMIC DNA]</scope>
    <source>
        <strain>E2</strain>
    </source>
</reference>
<reference key="3">
    <citation type="journal article" date="1994" name="J. Gen. Virol.">
        <title>Sequence and expression of a baculovirus protein with antigenic similarity to telokin.</title>
        <authorList>
            <person name="Raynes D.A."/>
            <person name="Hartshorne D.J."/>
            <person name="Guerriero V."/>
        </authorList>
    </citation>
    <scope>NUCLEOTIDE SEQUENCE [MRNA]</scope>
</reference>
<reference key="4">
    <citation type="journal article" date="1996" name="Acta Crystallogr. D">
        <title>Molecular structure of a proteolytic fragment of TLP20.</title>
        <authorList>
            <person name="Holden H.M."/>
            <person name="Wesenberg G."/>
            <person name="Raynes D.A."/>
            <person name="Hartshorne D.J."/>
            <person name="Guerriero V. Jr."/>
            <person name="Rayment I."/>
        </authorList>
    </citation>
    <scope>X-RAY CRYSTALLOGRAPHY (2.2 ANGSTROMS) OF 7-108</scope>
</reference>
<organismHost>
    <name type="scientific">Lepidoptera</name>
    <name type="common">butterflies and moths</name>
    <dbReference type="NCBI Taxonomy" id="7088"/>
</organismHost>
<keyword id="KW-0002">3D-structure</keyword>
<keyword id="KW-1185">Reference proteome</keyword>
<protein>
    <recommendedName>
        <fullName>Telokin-like protein 20</fullName>
    </recommendedName>
</protein>
<comment type="miscellaneous">
    <text>Shares some antigenic similarities to the smooth muscle protein telokin, but is not similar at the sequence level.</text>
</comment>
<proteinExistence type="evidence at protein level"/>
<dbReference type="EMBL" id="L22858">
    <property type="protein sequence ID" value="AAA66712.1"/>
    <property type="molecule type" value="Genomic_DNA"/>
</dbReference>
<dbReference type="EMBL" id="X71415">
    <property type="protein sequence ID" value="CAA50545.1"/>
    <property type="molecule type" value="Genomic_DNA"/>
</dbReference>
<dbReference type="EMBL" id="U06931">
    <property type="protein sequence ID" value="AAA20084.1"/>
    <property type="molecule type" value="mRNA"/>
</dbReference>
<dbReference type="PIR" id="C72860">
    <property type="entry name" value="C72860"/>
</dbReference>
<dbReference type="PIR" id="S36698">
    <property type="entry name" value="S36698"/>
</dbReference>
<dbReference type="PDB" id="1TUL">
    <property type="method" value="X-ray"/>
    <property type="resolution" value="2.20 A"/>
    <property type="chains" value="A=1-108"/>
</dbReference>
<dbReference type="PDBsum" id="1TUL"/>
<dbReference type="SMR" id="Q06691"/>
<dbReference type="KEGG" id="vg:1403915"/>
<dbReference type="OrthoDB" id="14128at10239"/>
<dbReference type="EvolutionaryTrace" id="Q06691"/>
<dbReference type="Proteomes" id="UP000008292">
    <property type="component" value="Segment"/>
</dbReference>
<dbReference type="CDD" id="cd00235">
    <property type="entry name" value="TLP-20"/>
    <property type="match status" value="1"/>
</dbReference>
<dbReference type="Gene3D" id="2.70.40.20">
    <property type="entry name" value="Baculovirus telokin-like protein 20"/>
    <property type="match status" value="1"/>
</dbReference>
<dbReference type="InterPro" id="IPR009092">
    <property type="entry name" value="Telokin-like_Tlp20_baculovir"/>
</dbReference>
<dbReference type="InterPro" id="IPR036731">
    <property type="entry name" value="Tlp20_sf"/>
</dbReference>
<dbReference type="Pfam" id="PF06088">
    <property type="entry name" value="TLP-20"/>
    <property type="match status" value="1"/>
</dbReference>
<dbReference type="SUPFAM" id="SSF51289">
    <property type="entry name" value="Tlp20, baculovirus telokin-like protein"/>
    <property type="match status" value="1"/>
</dbReference>
<feature type="chain" id="PRO_0000132851" description="Telokin-like protein 20">
    <location>
        <begin position="1"/>
        <end position="180"/>
    </location>
</feature>
<feature type="region of interest" description="Disordered" evidence="1">
    <location>
        <begin position="112"/>
        <end position="180"/>
    </location>
</feature>
<feature type="compositionally biased region" description="Acidic residues" evidence="1">
    <location>
        <begin position="156"/>
        <end position="165"/>
    </location>
</feature>
<feature type="sequence conflict" description="In Ref. 2; CAA50545." evidence="2" ref="2">
    <original>GVG</original>
    <variation>ALA</variation>
    <location>
        <begin position="39"/>
        <end position="41"/>
    </location>
</feature>
<feature type="sequence conflict" description="In Ref. 1; AAA66712." evidence="2" ref="1">
    <original>E</original>
    <variation>A</variation>
    <location>
        <position position="130"/>
    </location>
</feature>
<feature type="strand" evidence="3">
    <location>
        <begin position="11"/>
        <end position="17"/>
    </location>
</feature>
<feature type="strand" evidence="3">
    <location>
        <begin position="24"/>
        <end position="29"/>
    </location>
</feature>
<feature type="strand" evidence="3">
    <location>
        <begin position="33"/>
        <end position="35"/>
    </location>
</feature>
<feature type="strand" evidence="3">
    <location>
        <begin position="41"/>
        <end position="47"/>
    </location>
</feature>
<feature type="helix" evidence="3">
    <location>
        <begin position="51"/>
        <end position="57"/>
    </location>
</feature>
<feature type="strand" evidence="3">
    <location>
        <begin position="59"/>
        <end position="74"/>
    </location>
</feature>
<feature type="strand" evidence="3">
    <location>
        <begin position="84"/>
        <end position="91"/>
    </location>
</feature>
<feature type="strand" evidence="3">
    <location>
        <begin position="93"/>
        <end position="95"/>
    </location>
</feature>
<feature type="strand" evidence="3">
    <location>
        <begin position="100"/>
        <end position="107"/>
    </location>
</feature>
<evidence type="ECO:0000256" key="1">
    <source>
        <dbReference type="SAM" id="MobiDB-lite"/>
    </source>
</evidence>
<evidence type="ECO:0000305" key="2"/>
<evidence type="ECO:0007829" key="3">
    <source>
        <dbReference type="PDB" id="1TUL"/>
    </source>
</evidence>
<accession>Q06691</accession>
<accession>Q64806</accession>
<name>TLP20_NPVAC</name>
<organism>
    <name type="scientific">Autographa californica nuclear polyhedrosis virus</name>
    <name type="common">AcMNPV</name>
    <dbReference type="NCBI Taxonomy" id="46015"/>
    <lineage>
        <taxon>Viruses</taxon>
        <taxon>Viruses incertae sedis</taxon>
        <taxon>Naldaviricetes</taxon>
        <taxon>Lefavirales</taxon>
        <taxon>Baculoviridae</taxon>
        <taxon>Alphabaculovirus</taxon>
        <taxon>Alphabaculovirus aucalifornicae</taxon>
    </lineage>
</organism>